<accession>O46469</accession>
<gene>
    <name type="primary">RGS9</name>
</gene>
<dbReference type="EMBL" id="AF011357">
    <property type="protein sequence ID" value="AAC99480.1"/>
    <property type="molecule type" value="mRNA"/>
</dbReference>
<dbReference type="RefSeq" id="NP_776595.1">
    <property type="nucleotide sequence ID" value="NM_174170.2"/>
</dbReference>
<dbReference type="PDB" id="1FQI">
    <property type="method" value="X-ray"/>
    <property type="resolution" value="1.94 A"/>
    <property type="chains" value="A=276-422"/>
</dbReference>
<dbReference type="PDB" id="1FQJ">
    <property type="method" value="X-ray"/>
    <property type="resolution" value="2.02 A"/>
    <property type="chains" value="B/E=276-422"/>
</dbReference>
<dbReference type="PDB" id="1FQK">
    <property type="method" value="X-ray"/>
    <property type="resolution" value="2.30 A"/>
    <property type="chains" value="B/D=276-422"/>
</dbReference>
<dbReference type="PDBsum" id="1FQI"/>
<dbReference type="PDBsum" id="1FQJ"/>
<dbReference type="PDBsum" id="1FQK"/>
<dbReference type="SMR" id="O46469"/>
<dbReference type="CORUM" id="O46469"/>
<dbReference type="FunCoup" id="O46469">
    <property type="interactions" value="468"/>
</dbReference>
<dbReference type="IntAct" id="O46469">
    <property type="interactions" value="2"/>
</dbReference>
<dbReference type="MINT" id="O46469"/>
<dbReference type="STRING" id="9913.ENSBTAP00000023605"/>
<dbReference type="iPTMnet" id="O46469"/>
<dbReference type="PaxDb" id="9913-ENSBTAP00000023605"/>
<dbReference type="GeneID" id="281453"/>
<dbReference type="KEGG" id="bta:281453"/>
<dbReference type="CTD" id="8787"/>
<dbReference type="eggNOG" id="KOG3589">
    <property type="taxonomic scope" value="Eukaryota"/>
</dbReference>
<dbReference type="InParanoid" id="O46469"/>
<dbReference type="OrthoDB" id="196547at2759"/>
<dbReference type="EvolutionaryTrace" id="O46469"/>
<dbReference type="Proteomes" id="UP000009136">
    <property type="component" value="Unplaced"/>
</dbReference>
<dbReference type="GO" id="GO:0005737">
    <property type="term" value="C:cytoplasm"/>
    <property type="evidence" value="ECO:0000318"/>
    <property type="project" value="GO_Central"/>
</dbReference>
<dbReference type="GO" id="GO:0043005">
    <property type="term" value="C:neuron projection"/>
    <property type="evidence" value="ECO:0000318"/>
    <property type="project" value="GO_Central"/>
</dbReference>
<dbReference type="GO" id="GO:0097381">
    <property type="term" value="C:photoreceptor disc membrane"/>
    <property type="evidence" value="ECO:0000304"/>
    <property type="project" value="Reactome"/>
</dbReference>
<dbReference type="GO" id="GO:0005886">
    <property type="term" value="C:plasma membrane"/>
    <property type="evidence" value="ECO:0000318"/>
    <property type="project" value="GO_Central"/>
</dbReference>
<dbReference type="GO" id="GO:0005096">
    <property type="term" value="F:GTPase activator activity"/>
    <property type="evidence" value="ECO:0000318"/>
    <property type="project" value="GO_Central"/>
</dbReference>
<dbReference type="GO" id="GO:0007212">
    <property type="term" value="P:G protein-coupled dopamine receptor signaling pathway"/>
    <property type="evidence" value="ECO:0000318"/>
    <property type="project" value="GO_Central"/>
</dbReference>
<dbReference type="GO" id="GO:0035556">
    <property type="term" value="P:intracellular signal transduction"/>
    <property type="evidence" value="ECO:0007669"/>
    <property type="project" value="InterPro"/>
</dbReference>
<dbReference type="GO" id="GO:0009968">
    <property type="term" value="P:negative regulation of signal transduction"/>
    <property type="evidence" value="ECO:0007669"/>
    <property type="project" value="UniProtKB-KW"/>
</dbReference>
<dbReference type="GO" id="GO:0008277">
    <property type="term" value="P:regulation of G protein-coupled receptor signaling pathway"/>
    <property type="evidence" value="ECO:0007669"/>
    <property type="project" value="InterPro"/>
</dbReference>
<dbReference type="GO" id="GO:0007601">
    <property type="term" value="P:visual perception"/>
    <property type="evidence" value="ECO:0007669"/>
    <property type="project" value="UniProtKB-KW"/>
</dbReference>
<dbReference type="CDD" id="cd04450">
    <property type="entry name" value="DEP_RGS7-like"/>
    <property type="match status" value="1"/>
</dbReference>
<dbReference type="CDD" id="cd00068">
    <property type="entry name" value="GGL"/>
    <property type="match status" value="1"/>
</dbReference>
<dbReference type="CDD" id="cd08739">
    <property type="entry name" value="RGS_RGS9"/>
    <property type="match status" value="1"/>
</dbReference>
<dbReference type="FunFam" id="1.10.1240.60:FF:000001">
    <property type="entry name" value="Regulator of G-protein signaling 6"/>
    <property type="match status" value="1"/>
</dbReference>
<dbReference type="FunFam" id="1.10.167.10:FF:000002">
    <property type="entry name" value="Regulator of G-protein signaling 6 isoform 9"/>
    <property type="match status" value="1"/>
</dbReference>
<dbReference type="FunFam" id="1.10.10.10:FF:000329">
    <property type="entry name" value="regulator of G-protein signaling 9 isoform X2"/>
    <property type="match status" value="1"/>
</dbReference>
<dbReference type="Gene3D" id="1.10.1240.60">
    <property type="match status" value="1"/>
</dbReference>
<dbReference type="Gene3D" id="1.10.167.10">
    <property type="entry name" value="Regulator of G-protein Signalling 4, domain 2"/>
    <property type="match status" value="1"/>
</dbReference>
<dbReference type="Gene3D" id="4.10.260.10">
    <property type="entry name" value="Transducin (heterotrimeric G protein), gamma chain"/>
    <property type="match status" value="1"/>
</dbReference>
<dbReference type="Gene3D" id="1.10.10.10">
    <property type="entry name" value="Winged helix-like DNA-binding domain superfamily/Winged helix DNA-binding domain"/>
    <property type="match status" value="1"/>
</dbReference>
<dbReference type="InterPro" id="IPR000591">
    <property type="entry name" value="DEP_dom"/>
</dbReference>
<dbReference type="InterPro" id="IPR015898">
    <property type="entry name" value="G-protein_gamma-like_dom"/>
</dbReference>
<dbReference type="InterPro" id="IPR036284">
    <property type="entry name" value="GGL_sf"/>
</dbReference>
<dbReference type="InterPro" id="IPR016137">
    <property type="entry name" value="RGS"/>
</dbReference>
<dbReference type="InterPro" id="IPR047016">
    <property type="entry name" value="RGS6/7/9/11"/>
</dbReference>
<dbReference type="InterPro" id="IPR047017">
    <property type="entry name" value="RGS6/7/9/11_DHEX_sf"/>
</dbReference>
<dbReference type="InterPro" id="IPR047077">
    <property type="entry name" value="RGS9_RGS"/>
</dbReference>
<dbReference type="InterPro" id="IPR040759">
    <property type="entry name" value="RGS_DHEX"/>
</dbReference>
<dbReference type="InterPro" id="IPR036305">
    <property type="entry name" value="RGS_sf"/>
</dbReference>
<dbReference type="InterPro" id="IPR044926">
    <property type="entry name" value="RGS_subdomain_2"/>
</dbReference>
<dbReference type="InterPro" id="IPR036388">
    <property type="entry name" value="WH-like_DNA-bd_sf"/>
</dbReference>
<dbReference type="InterPro" id="IPR036390">
    <property type="entry name" value="WH_DNA-bd_sf"/>
</dbReference>
<dbReference type="PANTHER" id="PTHR45746">
    <property type="entry name" value="LP21163P"/>
    <property type="match status" value="1"/>
</dbReference>
<dbReference type="PANTHER" id="PTHR45746:SF1">
    <property type="entry name" value="REGULATOR OF G-PROTEIN SIGNALING 9"/>
    <property type="match status" value="1"/>
</dbReference>
<dbReference type="Pfam" id="PF00610">
    <property type="entry name" value="DEP"/>
    <property type="match status" value="1"/>
</dbReference>
<dbReference type="Pfam" id="PF00631">
    <property type="entry name" value="G-gamma"/>
    <property type="match status" value="1"/>
</dbReference>
<dbReference type="Pfam" id="PF00615">
    <property type="entry name" value="RGS"/>
    <property type="match status" value="1"/>
</dbReference>
<dbReference type="Pfam" id="PF18148">
    <property type="entry name" value="RGS_DHEX"/>
    <property type="match status" value="1"/>
</dbReference>
<dbReference type="PRINTS" id="PR01301">
    <property type="entry name" value="RGSPROTEIN"/>
</dbReference>
<dbReference type="SMART" id="SM00049">
    <property type="entry name" value="DEP"/>
    <property type="match status" value="1"/>
</dbReference>
<dbReference type="SMART" id="SM01224">
    <property type="entry name" value="G_gamma"/>
    <property type="match status" value="1"/>
</dbReference>
<dbReference type="SMART" id="SM00224">
    <property type="entry name" value="GGL"/>
    <property type="match status" value="1"/>
</dbReference>
<dbReference type="SMART" id="SM00315">
    <property type="entry name" value="RGS"/>
    <property type="match status" value="1"/>
</dbReference>
<dbReference type="SUPFAM" id="SSF48097">
    <property type="entry name" value="Regulator of G-protein signaling, RGS"/>
    <property type="match status" value="1"/>
</dbReference>
<dbReference type="SUPFAM" id="SSF48670">
    <property type="entry name" value="Transducin (heterotrimeric G protein), gamma chain"/>
    <property type="match status" value="1"/>
</dbReference>
<dbReference type="SUPFAM" id="SSF46785">
    <property type="entry name" value="Winged helix' DNA-binding domain"/>
    <property type="match status" value="1"/>
</dbReference>
<dbReference type="PROSITE" id="PS50186">
    <property type="entry name" value="DEP"/>
    <property type="match status" value="1"/>
</dbReference>
<dbReference type="PROSITE" id="PS50132">
    <property type="entry name" value="RGS"/>
    <property type="match status" value="1"/>
</dbReference>
<evidence type="ECO:0000250" key="1"/>
<evidence type="ECO:0000255" key="2">
    <source>
        <dbReference type="PROSITE-ProRule" id="PRU00066"/>
    </source>
</evidence>
<evidence type="ECO:0000255" key="3">
    <source>
        <dbReference type="PROSITE-ProRule" id="PRU00171"/>
    </source>
</evidence>
<evidence type="ECO:0000256" key="4">
    <source>
        <dbReference type="SAM" id="MobiDB-lite"/>
    </source>
</evidence>
<evidence type="ECO:0000269" key="5">
    <source>
    </source>
</evidence>
<evidence type="ECO:0000305" key="6">
    <source>
    </source>
</evidence>
<evidence type="ECO:0000305" key="7">
    <source>
    </source>
</evidence>
<evidence type="ECO:0007829" key="8">
    <source>
        <dbReference type="PDB" id="1FQI"/>
    </source>
</evidence>
<evidence type="ECO:0007829" key="9">
    <source>
        <dbReference type="PDB" id="1FQJ"/>
    </source>
</evidence>
<proteinExistence type="evidence at protein level"/>
<organism>
    <name type="scientific">Bos taurus</name>
    <name type="common">Bovine</name>
    <dbReference type="NCBI Taxonomy" id="9913"/>
    <lineage>
        <taxon>Eukaryota</taxon>
        <taxon>Metazoa</taxon>
        <taxon>Chordata</taxon>
        <taxon>Craniata</taxon>
        <taxon>Vertebrata</taxon>
        <taxon>Euteleostomi</taxon>
        <taxon>Mammalia</taxon>
        <taxon>Eutheria</taxon>
        <taxon>Laurasiatheria</taxon>
        <taxon>Artiodactyla</taxon>
        <taxon>Ruminantia</taxon>
        <taxon>Pecora</taxon>
        <taxon>Bovidae</taxon>
        <taxon>Bovinae</taxon>
        <taxon>Bos</taxon>
    </lineage>
</organism>
<reference key="1">
    <citation type="journal article" date="1998" name="Neuron">
        <title>RGS9, a GTPase accelerator for phototransduction.</title>
        <authorList>
            <person name="He W."/>
            <person name="Cowan C.W."/>
            <person name="Wensel T.G."/>
        </authorList>
    </citation>
    <scope>NUCLEOTIDE SEQUENCE [MRNA]</scope>
</reference>
<reference key="2">
    <citation type="journal article" date="1999" name="Proc. Natl. Acad. Sci. U.S.A.">
        <title>The GTPase activating factor for transducin in rod photoreceptors is the complex between RGS9 and type 5 G protein beta subunit.</title>
        <authorList>
            <person name="Makino E.R."/>
            <person name="Handy J.W."/>
            <person name="Li T."/>
            <person name="Arshavsky V.Y."/>
        </authorList>
    </citation>
    <scope>INTERACTION WITH GNB5</scope>
</reference>
<reference key="3">
    <citation type="journal article" date="2002" name="Proc. Natl. Acad. Sci. U.S.A.">
        <title>R9AP, a membrane anchor for the photoreceptor GTPase accelerating protein, RGS9-1.</title>
        <authorList>
            <person name="Hu G."/>
            <person name="Wensel T.G."/>
        </authorList>
    </citation>
    <scope>INTERACTION WITH RGS9BP</scope>
</reference>
<reference key="4">
    <citation type="journal article" date="2001" name="Nature">
        <title>Structural determinants for regulation of phosphodiesterase by a G protein at 2.0 A.</title>
        <authorList>
            <person name="Slep K.C."/>
            <person name="Kercher M.A."/>
            <person name="He W."/>
            <person name="Cowan C.W."/>
            <person name="Wensel T.G."/>
            <person name="Sigler P.B."/>
        </authorList>
    </citation>
    <scope>X-RAY CRYSTALLOGRAPHY (1.94 ANGSTROMS) OF 276-422 IN COMPLEX WITH PDE6G AND GNAT1</scope>
</reference>
<sequence>MTIRHQGQQYRPRMAFLRKIEALVKDMQDPDTGVRVQNQKVKVVSIPHAMTGSDVLQWISQRLWISGLEAQNLGNFIVKYGYIYPLQDPRNLTLKPDSSLYRFQTPYFWPTQQWPAEDVDYAIYLAKRNIKKKGILEEYEKENYNFLNKKINYKWDFVIMQAREQYRAGKERNKVDRCALDCQEKAYWLVHRCPPGANNVLDYGLDRVTNPNEDQKQTVVSVRKEIMYYRQALMRSTVKSSVSLGGIVKYSEQFSSNDAIMSGCLPSNPWITDDTQFWDLNAKLVDIPTKMRVERWAFNFSELIRDPKGRQSFQHFLRKEFSGENLGFWEACEDLKYGDQSKVKEKAEEIYKLFLAPGARRWINIDGKTMDITVKGLKHPHRYVLDAAQTHIYMLMKKDSYARYLKSPIYKEMLAKAIEPQGTTRKSSSLPFMRRHLRSSPSPVILRQLEEEAKAREAATTVDITQVMSKLDRRSQLRKEPPPK</sequence>
<keyword id="KW-0002">3D-structure</keyword>
<keyword id="KW-0472">Membrane</keyword>
<keyword id="KW-0597">Phosphoprotein</keyword>
<keyword id="KW-1185">Reference proteome</keyword>
<keyword id="KW-0716">Sensory transduction</keyword>
<keyword id="KW-0734">Signal transduction inhibitor</keyword>
<keyword id="KW-0844">Vision</keyword>
<feature type="chain" id="PRO_0000204202" description="Regulator of G-protein signaling 9">
    <location>
        <begin position="1"/>
        <end position="484"/>
    </location>
</feature>
<feature type="domain" description="DEP" evidence="2">
    <location>
        <begin position="30"/>
        <end position="105"/>
    </location>
</feature>
<feature type="domain" description="G protein gamma">
    <location>
        <begin position="219"/>
        <end position="280"/>
    </location>
</feature>
<feature type="domain" description="RGS" evidence="3">
    <location>
        <begin position="299"/>
        <end position="414"/>
    </location>
</feature>
<feature type="region of interest" description="Disordered" evidence="4">
    <location>
        <begin position="460"/>
        <end position="484"/>
    </location>
</feature>
<feature type="compositionally biased region" description="Basic and acidic residues" evidence="4">
    <location>
        <begin position="470"/>
        <end position="484"/>
    </location>
</feature>
<feature type="strand" evidence="9">
    <location>
        <begin position="282"/>
        <end position="284"/>
    </location>
</feature>
<feature type="helix" evidence="8">
    <location>
        <begin position="290"/>
        <end position="295"/>
    </location>
</feature>
<feature type="turn" evidence="8">
    <location>
        <begin position="296"/>
        <end position="298"/>
    </location>
</feature>
<feature type="helix" evidence="8">
    <location>
        <begin position="300"/>
        <end position="304"/>
    </location>
</feature>
<feature type="helix" evidence="8">
    <location>
        <begin position="307"/>
        <end position="319"/>
    </location>
</feature>
<feature type="helix" evidence="8">
    <location>
        <begin position="324"/>
        <end position="336"/>
    </location>
</feature>
<feature type="helix" evidence="8">
    <location>
        <begin position="340"/>
        <end position="342"/>
    </location>
</feature>
<feature type="helix" evidence="8">
    <location>
        <begin position="343"/>
        <end position="354"/>
    </location>
</feature>
<feature type="helix" evidence="8">
    <location>
        <begin position="367"/>
        <end position="376"/>
    </location>
</feature>
<feature type="turn" evidence="8">
    <location>
        <begin position="382"/>
        <end position="385"/>
    </location>
</feature>
<feature type="helix" evidence="8">
    <location>
        <begin position="386"/>
        <end position="399"/>
    </location>
</feature>
<feature type="helix" evidence="8">
    <location>
        <begin position="401"/>
        <end position="405"/>
    </location>
</feature>
<feature type="helix" evidence="8">
    <location>
        <begin position="408"/>
        <end position="416"/>
    </location>
</feature>
<protein>
    <recommendedName>
        <fullName>Regulator of G-protein signaling 9</fullName>
        <shortName>RGS9</shortName>
    </recommendedName>
</protein>
<name>RGS9_BOVIN</name>
<comment type="function">
    <text>Inhibits signal transduction by increasing the GTPase activity of G protein alpha subunits thereby driving them into their inactive GDP-bound form. Binds to GNAT1. Involved in phototransduction; key element in the recovery phase of visual transduction.</text>
</comment>
<comment type="subunit">
    <text evidence="5 6 7">Heterodimer with GNB5. Interacts with RGS7BP, leading to regulate the subcellular location of the heterodimer formed with GNB5. Component of the RGS9-1-Gbeta5 complex composed of RGS9 (RGS9-1), Gbeta5 (GNB5) and RGS9BP (Probable). Interacts with PDE6G and GNAT1 (PubMed:11234020).</text>
</comment>
<comment type="interaction">
    <interactant intactId="EBI-6949890">
        <id>O46469</id>
    </interactant>
    <interactant intactId="EBI-6949917">
        <id>A5PJS1</id>
        <label>GNB5</label>
    </interactant>
    <organismsDiffer>false</organismsDiffer>
    <experiments>5</experiments>
</comment>
<comment type="subcellular location">
    <subcellularLocation>
        <location>Membrane</location>
        <topology>Peripheral membrane protein</topology>
    </subcellularLocation>
    <text evidence="1">Targeted to the membrane via its interaction with RGS9BP.</text>
</comment>
<comment type="tissue specificity">
    <text>Photoreceptor outer segments.</text>
</comment>
<comment type="PTM">
    <text>Phosphorylation is decreased by light exposition.</text>
</comment>